<name>TORD_ECO8A</name>
<keyword id="KW-0143">Chaperone</keyword>
<keyword id="KW-0963">Cytoplasm</keyword>
<dbReference type="EMBL" id="CU928160">
    <property type="protein sequence ID" value="CAQ97905.1"/>
    <property type="molecule type" value="Genomic_DNA"/>
</dbReference>
<dbReference type="RefSeq" id="WP_000209866.1">
    <property type="nucleotide sequence ID" value="NC_011741.1"/>
</dbReference>
<dbReference type="SMR" id="B7M8Y1"/>
<dbReference type="KEGG" id="ecr:ECIAI1_1041"/>
<dbReference type="HOGENOM" id="CLU_077650_4_0_6"/>
<dbReference type="GO" id="GO:0005737">
    <property type="term" value="C:cytoplasm"/>
    <property type="evidence" value="ECO:0007669"/>
    <property type="project" value="UniProtKB-SubCell"/>
</dbReference>
<dbReference type="GO" id="GO:0051259">
    <property type="term" value="P:protein complex oligomerization"/>
    <property type="evidence" value="ECO:0007669"/>
    <property type="project" value="InterPro"/>
</dbReference>
<dbReference type="GO" id="GO:0006457">
    <property type="term" value="P:protein folding"/>
    <property type="evidence" value="ECO:0007669"/>
    <property type="project" value="UniProtKB-UniRule"/>
</dbReference>
<dbReference type="FunFam" id="1.20.120.1820:FF:000001">
    <property type="entry name" value="Chaperone protein TorD"/>
    <property type="match status" value="1"/>
</dbReference>
<dbReference type="FunFam" id="1.20.1280.20:FF:000003">
    <property type="entry name" value="Chaperone protein TorD"/>
    <property type="match status" value="1"/>
</dbReference>
<dbReference type="Gene3D" id="1.20.120.1820">
    <property type="match status" value="1"/>
</dbReference>
<dbReference type="Gene3D" id="1.20.1280.20">
    <property type="entry name" value="HscB, C-terminal domain"/>
    <property type="match status" value="1"/>
</dbReference>
<dbReference type="HAMAP" id="MF_01150">
    <property type="entry name" value="TorD"/>
    <property type="match status" value="1"/>
</dbReference>
<dbReference type="InterPro" id="IPR023069">
    <property type="entry name" value="Chaperone_TorD"/>
</dbReference>
<dbReference type="InterPro" id="IPR020945">
    <property type="entry name" value="DMSO/NO3_reduct_chaperone"/>
</dbReference>
<dbReference type="InterPro" id="IPR036386">
    <property type="entry name" value="HscB_C_sf"/>
</dbReference>
<dbReference type="InterPro" id="IPR036411">
    <property type="entry name" value="TorD-like_sf"/>
</dbReference>
<dbReference type="InterPro" id="IPR050289">
    <property type="entry name" value="TorD/DmsD_chaperones"/>
</dbReference>
<dbReference type="NCBIfam" id="NF003442">
    <property type="entry name" value="PRK04976.1"/>
    <property type="match status" value="1"/>
</dbReference>
<dbReference type="PANTHER" id="PTHR34227:SF11">
    <property type="entry name" value="CHAPERONE PROTEIN TORD"/>
    <property type="match status" value="1"/>
</dbReference>
<dbReference type="PANTHER" id="PTHR34227">
    <property type="entry name" value="CHAPERONE PROTEIN YCDY"/>
    <property type="match status" value="1"/>
</dbReference>
<dbReference type="Pfam" id="PF02613">
    <property type="entry name" value="Nitrate_red_del"/>
    <property type="match status" value="1"/>
</dbReference>
<dbReference type="SUPFAM" id="SSF89155">
    <property type="entry name" value="TorD-like"/>
    <property type="match status" value="1"/>
</dbReference>
<reference key="1">
    <citation type="journal article" date="2009" name="PLoS Genet.">
        <title>Organised genome dynamics in the Escherichia coli species results in highly diverse adaptive paths.</title>
        <authorList>
            <person name="Touchon M."/>
            <person name="Hoede C."/>
            <person name="Tenaillon O."/>
            <person name="Barbe V."/>
            <person name="Baeriswyl S."/>
            <person name="Bidet P."/>
            <person name="Bingen E."/>
            <person name="Bonacorsi S."/>
            <person name="Bouchier C."/>
            <person name="Bouvet O."/>
            <person name="Calteau A."/>
            <person name="Chiapello H."/>
            <person name="Clermont O."/>
            <person name="Cruveiller S."/>
            <person name="Danchin A."/>
            <person name="Diard M."/>
            <person name="Dossat C."/>
            <person name="Karoui M.E."/>
            <person name="Frapy E."/>
            <person name="Garry L."/>
            <person name="Ghigo J.M."/>
            <person name="Gilles A.M."/>
            <person name="Johnson J."/>
            <person name="Le Bouguenec C."/>
            <person name="Lescat M."/>
            <person name="Mangenot S."/>
            <person name="Martinez-Jehanne V."/>
            <person name="Matic I."/>
            <person name="Nassif X."/>
            <person name="Oztas S."/>
            <person name="Petit M.A."/>
            <person name="Pichon C."/>
            <person name="Rouy Z."/>
            <person name="Ruf C.S."/>
            <person name="Schneider D."/>
            <person name="Tourret J."/>
            <person name="Vacherie B."/>
            <person name="Vallenet D."/>
            <person name="Medigue C."/>
            <person name="Rocha E.P.C."/>
            <person name="Denamur E."/>
        </authorList>
    </citation>
    <scope>NUCLEOTIDE SEQUENCE [LARGE SCALE GENOMIC DNA]</scope>
    <source>
        <strain>IAI1</strain>
    </source>
</reference>
<sequence length="199" mass="22444">MTTLTAQQIACVYAWLAQLFSRELDDEQLTQIASAQMAEWFSLLKSEPPLAAAVNELENCIATLTVRDDARLELAADFCGLFLMTDKQAALPYASAYKQDEQEIKRLLVEAGMETSGNFNEPADHLAIYLELLSHLHFSLGEGTVPARRIDSLRQKTLTALWQWLPEFAARCHQYDSFGFYAALSQLLLVLVECDHQNR</sequence>
<comment type="function">
    <text evidence="1">Involved in the biogenesis of TorA. Acts on TorA before the insertion of the molybdenum cofactor and, as a result, probably favors a conformation of the apoenzyme that is competent for acquiring the cofactor.</text>
</comment>
<comment type="subcellular location">
    <subcellularLocation>
        <location evidence="1">Cytoplasm</location>
    </subcellularLocation>
</comment>
<comment type="similarity">
    <text evidence="1">Belongs to the TorD/DmsD family. TorD subfamily.</text>
</comment>
<organism>
    <name type="scientific">Escherichia coli O8 (strain IAI1)</name>
    <dbReference type="NCBI Taxonomy" id="585034"/>
    <lineage>
        <taxon>Bacteria</taxon>
        <taxon>Pseudomonadati</taxon>
        <taxon>Pseudomonadota</taxon>
        <taxon>Gammaproteobacteria</taxon>
        <taxon>Enterobacterales</taxon>
        <taxon>Enterobacteriaceae</taxon>
        <taxon>Escherichia</taxon>
    </lineage>
</organism>
<evidence type="ECO:0000255" key="1">
    <source>
        <dbReference type="HAMAP-Rule" id="MF_01150"/>
    </source>
</evidence>
<accession>B7M8Y1</accession>
<proteinExistence type="inferred from homology"/>
<feature type="chain" id="PRO_1000137506" description="Chaperone protein TorD">
    <location>
        <begin position="1"/>
        <end position="199"/>
    </location>
</feature>
<protein>
    <recommendedName>
        <fullName evidence="1">Chaperone protein TorD</fullName>
    </recommendedName>
</protein>
<gene>
    <name evidence="1" type="primary">torD</name>
    <name type="ordered locus">ECIAI1_1041</name>
</gene>